<organism>
    <name type="scientific">Cereibacter sphaeroides (strain ATCC 17023 / DSM 158 / JCM 6121 / CCUG 31486 / LMG 2827 / NBRC 12203 / NCIMB 8253 / ATH 2.4.1.)</name>
    <name type="common">Rhodobacter sphaeroides</name>
    <dbReference type="NCBI Taxonomy" id="272943"/>
    <lineage>
        <taxon>Bacteria</taxon>
        <taxon>Pseudomonadati</taxon>
        <taxon>Pseudomonadota</taxon>
        <taxon>Alphaproteobacteria</taxon>
        <taxon>Rhodobacterales</taxon>
        <taxon>Paracoccaceae</taxon>
        <taxon>Cereibacter</taxon>
    </lineage>
</organism>
<proteinExistence type="evidence at protein level"/>
<evidence type="ECO:0000269" key="1">
    <source>
    </source>
</evidence>
<evidence type="ECO:0007829" key="2">
    <source>
        <dbReference type="PDB" id="1DW0"/>
    </source>
</evidence>
<name>SHP_CERS4</name>
<reference key="1">
    <citation type="submission" date="2005-09" db="EMBL/GenBank/DDBJ databases">
        <title>Complete sequence of chromosome 1 of Rhodobacter sphaeroides 2.4.1.</title>
        <authorList>
            <person name="Copeland A."/>
            <person name="Lucas S."/>
            <person name="Lapidus A."/>
            <person name="Barry K."/>
            <person name="Detter J.C."/>
            <person name="Glavina T."/>
            <person name="Hammon N."/>
            <person name="Israni S."/>
            <person name="Pitluck S."/>
            <person name="Richardson P."/>
            <person name="Mackenzie C."/>
            <person name="Choudhary M."/>
            <person name="Larimer F."/>
            <person name="Hauser L.J."/>
            <person name="Land M."/>
            <person name="Donohue T.J."/>
            <person name="Kaplan S."/>
        </authorList>
    </citation>
    <scope>NUCLEOTIDE SEQUENCE [LARGE SCALE GENOMIC DNA]</scope>
    <source>
        <strain>ATCC 17023 / DSM 158 / JCM 6121 / CCUG 31486 / LMG 2827 / NBRC 12203 / NCIMB 8253 / ATH 2.4.1.</strain>
    </source>
</reference>
<reference key="2">
    <citation type="journal article" date="1998" name="Biochemistry">
        <title>Ligand binding and covalent structure of an oxygen-binding heme protein from Rhodobacter sphaeroides, a representative of a new structural family of c-type cytochromes.</title>
        <authorList>
            <person name="Klarskov K."/>
            <person name="van Driessche G."/>
            <person name="Backers K."/>
            <person name="Dumortier C."/>
            <person name="Meyer T.E."/>
            <person name="Tollin G."/>
            <person name="Cusanovich M.A."/>
            <person name="van Beeumen J.J."/>
        </authorList>
    </citation>
    <scope>PROTEIN SEQUENCE OF 18-129</scope>
</reference>
<reference key="3">
    <citation type="journal article" date="2000" name="J. Biol. Chem.">
        <title>Crystal structures of an oxygen-binding cytochrome c from Rhodobacter sphaeroides.</title>
        <authorList>
            <person name="Leys D."/>
            <person name="Backers K."/>
            <person name="Meyer T.E."/>
            <person name="Hagen W.R."/>
            <person name="Cusanovich M.A."/>
            <person name="Van Beeumen J.J."/>
        </authorList>
    </citation>
    <scope>X-RAY CRYSTALLOGRAPHY (1.82 ANGSTROMS) OF 18-129</scope>
</reference>
<gene>
    <name type="primary">shp</name>
    <name type="ordered locus">RHOS4_06040</name>
    <name type="ORF">RSP_2021</name>
</gene>
<sequence>MTRFLILSAVLAGPALAGDTSPAQLIAGYEAAAGAPADAERGRALFLSTQTGGKPDTPSCTTCHGADVTRAGQTRTGKEIAPLAPSATPDRFTDSARVEKWLGRNCNSVIGRDCTPGEKADLLAWLAAQ</sequence>
<feature type="signal peptide" evidence="1">
    <location>
        <begin position="1"/>
        <end position="17"/>
    </location>
</feature>
<feature type="chain" id="PRO_0000045861" description="Cytochrome c-type protein SHP">
    <location>
        <begin position="18"/>
        <end position="129"/>
    </location>
</feature>
<feature type="binding site" description="covalent">
    <location>
        <position position="60"/>
    </location>
    <ligand>
        <name>heme c</name>
        <dbReference type="ChEBI" id="CHEBI:61717"/>
    </ligand>
</feature>
<feature type="binding site" description="covalent">
    <location>
        <position position="63"/>
    </location>
    <ligand>
        <name>heme c</name>
        <dbReference type="ChEBI" id="CHEBI:61717"/>
    </ligand>
</feature>
<feature type="binding site" description="axial binding residue">
    <location>
        <position position="64"/>
    </location>
    <ligand>
        <name>heme c</name>
        <dbReference type="ChEBI" id="CHEBI:61717"/>
    </ligand>
    <ligandPart>
        <name>Fe</name>
        <dbReference type="ChEBI" id="CHEBI:18248"/>
    </ligandPart>
</feature>
<feature type="disulfide bond">
    <location>
        <begin position="106"/>
        <end position="114"/>
    </location>
</feature>
<feature type="helix" evidence="2">
    <location>
        <begin position="22"/>
        <end position="33"/>
    </location>
</feature>
<feature type="helix" evidence="2">
    <location>
        <begin position="39"/>
        <end position="47"/>
    </location>
</feature>
<feature type="strand" evidence="2">
    <location>
        <begin position="51"/>
        <end position="53"/>
    </location>
</feature>
<feature type="helix" evidence="2">
    <location>
        <begin position="61"/>
        <end position="64"/>
    </location>
</feature>
<feature type="turn" evidence="2">
    <location>
        <begin position="85"/>
        <end position="87"/>
    </location>
</feature>
<feature type="turn" evidence="2">
    <location>
        <begin position="89"/>
        <end position="92"/>
    </location>
</feature>
<feature type="helix" evidence="2">
    <location>
        <begin position="95"/>
        <end position="110"/>
    </location>
</feature>
<feature type="helix" evidence="2">
    <location>
        <begin position="116"/>
        <end position="127"/>
    </location>
</feature>
<protein>
    <recommendedName>
        <fullName>Cytochrome c-type protein SHP</fullName>
    </recommendedName>
    <alternativeName>
        <fullName>Oxygen-binding heme protein</fullName>
    </alternativeName>
    <alternativeName>
        <fullName>Sphaeroides heme protein</fullName>
    </alternativeName>
</protein>
<dbReference type="EMBL" id="CP000143">
    <property type="protein sequence ID" value="ABA78172.1"/>
    <property type="molecule type" value="Genomic_DNA"/>
</dbReference>
<dbReference type="RefSeq" id="WP_011337164.1">
    <property type="nucleotide sequence ID" value="NC_007493.2"/>
</dbReference>
<dbReference type="RefSeq" id="YP_352073.1">
    <property type="nucleotide sequence ID" value="NC_007493.2"/>
</dbReference>
<dbReference type="PDB" id="1DW0">
    <property type="method" value="X-ray"/>
    <property type="resolution" value="1.82 A"/>
    <property type="chains" value="A/B/C=18-129"/>
</dbReference>
<dbReference type="PDB" id="1DW1">
    <property type="method" value="X-ray"/>
    <property type="resolution" value="1.90 A"/>
    <property type="chains" value="A/B/C=18-129"/>
</dbReference>
<dbReference type="PDB" id="1DW2">
    <property type="method" value="X-ray"/>
    <property type="resolution" value="2.20 A"/>
    <property type="chains" value="A/B/C=18-129"/>
</dbReference>
<dbReference type="PDB" id="1DW3">
    <property type="method" value="X-ray"/>
    <property type="resolution" value="2.10 A"/>
    <property type="chains" value="A/B/C=18-129"/>
</dbReference>
<dbReference type="PDBsum" id="1DW0"/>
<dbReference type="PDBsum" id="1DW1"/>
<dbReference type="PDBsum" id="1DW2"/>
<dbReference type="PDBsum" id="1DW3"/>
<dbReference type="SMR" id="P81238"/>
<dbReference type="STRING" id="272943.RSP_2021"/>
<dbReference type="EnsemblBacteria" id="ABA78172">
    <property type="protein sequence ID" value="ABA78172"/>
    <property type="gene ID" value="RSP_2021"/>
</dbReference>
<dbReference type="GeneID" id="3719355"/>
<dbReference type="KEGG" id="rsp:RSP_2021"/>
<dbReference type="PATRIC" id="fig|272943.9.peg.913"/>
<dbReference type="eggNOG" id="COG1858">
    <property type="taxonomic scope" value="Bacteria"/>
</dbReference>
<dbReference type="OrthoDB" id="5295318at2"/>
<dbReference type="PhylomeDB" id="P81238"/>
<dbReference type="EvolutionaryTrace" id="P81238"/>
<dbReference type="Proteomes" id="UP000002703">
    <property type="component" value="Chromosome 1"/>
</dbReference>
<dbReference type="GO" id="GO:0009055">
    <property type="term" value="F:electron transfer activity"/>
    <property type="evidence" value="ECO:0007669"/>
    <property type="project" value="InterPro"/>
</dbReference>
<dbReference type="GO" id="GO:0020037">
    <property type="term" value="F:heme binding"/>
    <property type="evidence" value="ECO:0007669"/>
    <property type="project" value="InterPro"/>
</dbReference>
<dbReference type="GO" id="GO:0046872">
    <property type="term" value="F:metal ion binding"/>
    <property type="evidence" value="ECO:0007669"/>
    <property type="project" value="UniProtKB-KW"/>
</dbReference>
<dbReference type="Gene3D" id="1.10.760.10">
    <property type="entry name" value="Cytochrome c-like domain"/>
    <property type="match status" value="1"/>
</dbReference>
<dbReference type="InterPro" id="IPR009056">
    <property type="entry name" value="Cyt_c-like_dom"/>
</dbReference>
<dbReference type="InterPro" id="IPR036909">
    <property type="entry name" value="Cyt_c-like_dom_sf"/>
</dbReference>
<dbReference type="InterPro" id="IPR015170">
    <property type="entry name" value="DUF1924_SHP"/>
</dbReference>
<dbReference type="Pfam" id="PF09086">
    <property type="entry name" value="DUF1924"/>
    <property type="match status" value="1"/>
</dbReference>
<dbReference type="SUPFAM" id="SSF46626">
    <property type="entry name" value="Cytochrome c"/>
    <property type="match status" value="1"/>
</dbReference>
<dbReference type="PROSITE" id="PS51007">
    <property type="entry name" value="CYTC"/>
    <property type="match status" value="1"/>
</dbReference>
<accession>P81238</accession>
<accession>Q3J4W2</accession>
<comment type="function">
    <text>High-spin cytochrome. Transiently bind oxygen during autoxidation, which occurs with a half-life of 3 minutes with a 4-fold excess of O(2). Also binds carbon monoxide, azide and cyanide.</text>
</comment>
<comment type="biophysicochemical properties">
    <redoxPotential>
        <text>E(0) is -22 mV.</text>
    </redoxPotential>
</comment>
<comment type="PTM">
    <text>Binds 1 heme c group covalently per subunit.</text>
</comment>
<keyword id="KW-0002">3D-structure</keyword>
<keyword id="KW-0903">Direct protein sequencing</keyword>
<keyword id="KW-1015">Disulfide bond</keyword>
<keyword id="KW-0249">Electron transport</keyword>
<keyword id="KW-0349">Heme</keyword>
<keyword id="KW-0408">Iron</keyword>
<keyword id="KW-0479">Metal-binding</keyword>
<keyword id="KW-1185">Reference proteome</keyword>
<keyword id="KW-0732">Signal</keyword>
<keyword id="KW-0813">Transport</keyword>